<protein>
    <recommendedName>
        <fullName>Chymase</fullName>
        <ecNumber>3.4.21.39</ecNumber>
    </recommendedName>
    <alternativeName>
        <fullName>Alpha-chymase</fullName>
    </alternativeName>
</protein>
<name>CMA1_CAVPO</name>
<sequence>MCLLSLPLLLFLQYTRAKAGEVIGGTECKPHSRPYMAYLEIVSSEGYEKDCGGFLIRRNFVLTAAHCAGRSLTVNLGVHNKKMKEDTWQRLKVIKQFLHPNYNSSVLLHDIMLLKLEKKANLTLAVGTLPLPPECNFLTSGRMCRAAGWGRTNVEEPASDTLQEVKLRLMDPQACKHFPNFNHNLQLCVGNPRKRKSVFKGDSGGPLLCAGIAQGIVSYAHRNAKPPVVFTRISHYRPWINKILKAN</sequence>
<organism>
    <name type="scientific">Cavia porcellus</name>
    <name type="common">Guinea pig</name>
    <dbReference type="NCBI Taxonomy" id="10141"/>
    <lineage>
        <taxon>Eukaryota</taxon>
        <taxon>Metazoa</taxon>
        <taxon>Chordata</taxon>
        <taxon>Craniata</taxon>
        <taxon>Vertebrata</taxon>
        <taxon>Euteleostomi</taxon>
        <taxon>Mammalia</taxon>
        <taxon>Eutheria</taxon>
        <taxon>Euarchontoglires</taxon>
        <taxon>Glires</taxon>
        <taxon>Rodentia</taxon>
        <taxon>Hystricomorpha</taxon>
        <taxon>Caviidae</taxon>
        <taxon>Cavia</taxon>
    </lineage>
</organism>
<proteinExistence type="evidence at protein level"/>
<dbReference type="EC" id="3.4.21.39"/>
<dbReference type="EMBL" id="AM851020">
    <property type="protein sequence ID" value="CAO99144.1"/>
    <property type="molecule type" value="mRNA"/>
</dbReference>
<dbReference type="RefSeq" id="NP_001166403.1">
    <property type="nucleotide sequence ID" value="NM_001172932.1"/>
</dbReference>
<dbReference type="SMR" id="A7WPL7"/>
<dbReference type="FunCoup" id="A7WPL7">
    <property type="interactions" value="258"/>
</dbReference>
<dbReference type="STRING" id="10141.ENSCPOP00000011161"/>
<dbReference type="MEROPS" id="S01.140"/>
<dbReference type="GlyCosmos" id="A7WPL7">
    <property type="glycosylation" value="2 sites, No reported glycans"/>
</dbReference>
<dbReference type="GeneID" id="100135503"/>
<dbReference type="KEGG" id="cpoc:100135503"/>
<dbReference type="CTD" id="1215"/>
<dbReference type="eggNOG" id="KOG3627">
    <property type="taxonomic scope" value="Eukaryota"/>
</dbReference>
<dbReference type="InParanoid" id="A7WPL7"/>
<dbReference type="OrthoDB" id="5565075at2759"/>
<dbReference type="BRENDA" id="3.4.21.39">
    <property type="organism ID" value="1225"/>
</dbReference>
<dbReference type="Proteomes" id="UP000005447">
    <property type="component" value="Unassembled WGS sequence"/>
</dbReference>
<dbReference type="GO" id="GO:0005737">
    <property type="term" value="C:cytoplasm"/>
    <property type="evidence" value="ECO:0007669"/>
    <property type="project" value="TreeGrafter"/>
</dbReference>
<dbReference type="GO" id="GO:0005615">
    <property type="term" value="C:extracellular space"/>
    <property type="evidence" value="ECO:0007669"/>
    <property type="project" value="TreeGrafter"/>
</dbReference>
<dbReference type="GO" id="GO:0043231">
    <property type="term" value="C:intracellular membrane-bounded organelle"/>
    <property type="evidence" value="ECO:0007669"/>
    <property type="project" value="TreeGrafter"/>
</dbReference>
<dbReference type="GO" id="GO:0004252">
    <property type="term" value="F:serine-type endopeptidase activity"/>
    <property type="evidence" value="ECO:0007669"/>
    <property type="project" value="UniProtKB-EC"/>
</dbReference>
<dbReference type="GO" id="GO:0006508">
    <property type="term" value="P:proteolysis"/>
    <property type="evidence" value="ECO:0007669"/>
    <property type="project" value="UniProtKB-KW"/>
</dbReference>
<dbReference type="CDD" id="cd00190">
    <property type="entry name" value="Tryp_SPc"/>
    <property type="match status" value="1"/>
</dbReference>
<dbReference type="FunFam" id="2.40.10.10:FF:000014">
    <property type="entry name" value="Complement factor D"/>
    <property type="match status" value="1"/>
</dbReference>
<dbReference type="FunFam" id="2.40.10.10:FF:000005">
    <property type="entry name" value="Serine protease 37"/>
    <property type="match status" value="1"/>
</dbReference>
<dbReference type="Gene3D" id="2.40.10.10">
    <property type="entry name" value="Trypsin-like serine proteases"/>
    <property type="match status" value="2"/>
</dbReference>
<dbReference type="InterPro" id="IPR009003">
    <property type="entry name" value="Peptidase_S1_PA"/>
</dbReference>
<dbReference type="InterPro" id="IPR043504">
    <property type="entry name" value="Peptidase_S1_PA_chymotrypsin"/>
</dbReference>
<dbReference type="InterPro" id="IPR001314">
    <property type="entry name" value="Peptidase_S1A"/>
</dbReference>
<dbReference type="InterPro" id="IPR001254">
    <property type="entry name" value="Trypsin_dom"/>
</dbReference>
<dbReference type="InterPro" id="IPR018114">
    <property type="entry name" value="TRYPSIN_HIS"/>
</dbReference>
<dbReference type="InterPro" id="IPR033116">
    <property type="entry name" value="TRYPSIN_SER"/>
</dbReference>
<dbReference type="PANTHER" id="PTHR24271:SF24">
    <property type="entry name" value="CHYMASE"/>
    <property type="match status" value="1"/>
</dbReference>
<dbReference type="PANTHER" id="PTHR24271">
    <property type="entry name" value="KALLIKREIN-RELATED"/>
    <property type="match status" value="1"/>
</dbReference>
<dbReference type="Pfam" id="PF00089">
    <property type="entry name" value="Trypsin"/>
    <property type="match status" value="1"/>
</dbReference>
<dbReference type="PRINTS" id="PR00722">
    <property type="entry name" value="CHYMOTRYPSIN"/>
</dbReference>
<dbReference type="SMART" id="SM00020">
    <property type="entry name" value="Tryp_SPc"/>
    <property type="match status" value="1"/>
</dbReference>
<dbReference type="SUPFAM" id="SSF50494">
    <property type="entry name" value="Trypsin-like serine proteases"/>
    <property type="match status" value="1"/>
</dbReference>
<dbReference type="PROSITE" id="PS50240">
    <property type="entry name" value="TRYPSIN_DOM"/>
    <property type="match status" value="1"/>
</dbReference>
<dbReference type="PROSITE" id="PS00134">
    <property type="entry name" value="TRYPSIN_HIS"/>
    <property type="match status" value="1"/>
</dbReference>
<dbReference type="PROSITE" id="PS00135">
    <property type="entry name" value="TRYPSIN_SER"/>
    <property type="match status" value="1"/>
</dbReference>
<accession>A7WPL7</accession>
<accession>P85201</accession>
<reference evidence="6" key="1">
    <citation type="submission" date="2007-09" db="EMBL/GenBank/DDBJ databases">
        <title>Guinea pig chymase is leucine-specific: a novel example of functional plasticity in the chymase/granzyme family of immune cell serine peptidases.</title>
        <authorList>
            <person name="Beauchamp J.C."/>
            <person name="Caughey G.H."/>
            <person name="Fingerle J."/>
            <person name="Schliemann K."/>
        </authorList>
    </citation>
    <scope>NUCLEOTIDE SEQUENCE [MRNA]</scope>
    <source>
        <tissue evidence="6">Heart</tissue>
    </source>
</reference>
<reference evidence="5" key="2">
    <citation type="journal article" date="2008" name="J. Biol. Chem.">
        <title>Structural basis for elastolytic substrate specificity in rodent alpha-chymases.</title>
        <authorList>
            <person name="Kervinen J."/>
            <person name="Abad M."/>
            <person name="Crysler C."/>
            <person name="Kolpak M."/>
            <person name="Mahan A.D."/>
            <person name="Masucci J.A."/>
            <person name="Bayoumy S."/>
            <person name="Cummings M.D."/>
            <person name="Yao X."/>
            <person name="Olson M."/>
            <person name="de Garavilla L."/>
            <person name="Kuo L."/>
            <person name="Deckman I."/>
            <person name="Spurlino J."/>
        </authorList>
    </citation>
    <scope>PROTEIN SEQUENCE OF 22-247</scope>
</reference>
<feature type="signal peptide" evidence="2">
    <location>
        <begin position="1"/>
        <end position="17"/>
    </location>
</feature>
<feature type="propeptide" id="PRO_0000312843" description="Activation peptide" evidence="2 4">
    <location>
        <begin position="18"/>
        <end position="21"/>
    </location>
</feature>
<feature type="chain" id="PRO_5000271615" description="Chymase" evidence="4">
    <location>
        <begin position="22"/>
        <end position="247"/>
    </location>
</feature>
<feature type="domain" description="Peptidase S1" evidence="3">
    <location>
        <begin position="22"/>
        <end position="245"/>
    </location>
</feature>
<feature type="active site" description="Charge relay system" evidence="1">
    <location>
        <position position="66"/>
    </location>
</feature>
<feature type="active site" description="Charge relay system" evidence="1">
    <location>
        <position position="110"/>
    </location>
</feature>
<feature type="active site" description="Charge relay system" evidence="1">
    <location>
        <position position="203"/>
    </location>
</feature>
<feature type="glycosylation site" description="N-linked (GlcNAc...) asparagine" evidence="2">
    <location>
        <position position="103"/>
    </location>
</feature>
<feature type="glycosylation site" description="N-linked (GlcNAc...) asparagine" evidence="2">
    <location>
        <position position="121"/>
    </location>
</feature>
<feature type="disulfide bond" evidence="1 3">
    <location>
        <begin position="51"/>
        <end position="67"/>
    </location>
</feature>
<feature type="disulfide bond" evidence="1 3">
    <location>
        <begin position="144"/>
        <end position="209"/>
    </location>
</feature>
<feature type="disulfide bond" evidence="1 3">
    <location>
        <begin position="175"/>
        <end position="188"/>
    </location>
</feature>
<feature type="sequence conflict" description="In Ref. 2; AA sequence." evidence="5" ref="2">
    <original>G</original>
    <variation>S</variation>
    <location>
        <position position="52"/>
    </location>
</feature>
<evidence type="ECO:0000250" key="1">
    <source>
        <dbReference type="UniProtKB" id="P23946"/>
    </source>
</evidence>
<evidence type="ECO:0000255" key="2"/>
<evidence type="ECO:0000255" key="3">
    <source>
        <dbReference type="PROSITE-ProRule" id="PRU00274"/>
    </source>
</evidence>
<evidence type="ECO:0000269" key="4">
    <source>
    </source>
</evidence>
<evidence type="ECO:0000305" key="5"/>
<evidence type="ECO:0000312" key="6">
    <source>
        <dbReference type="EMBL" id="CAO99144.1"/>
    </source>
</evidence>
<keyword id="KW-0903">Direct protein sequencing</keyword>
<keyword id="KW-1015">Disulfide bond</keyword>
<keyword id="KW-0325">Glycoprotein</keyword>
<keyword id="KW-0378">Hydrolase</keyword>
<keyword id="KW-0645">Protease</keyword>
<keyword id="KW-1185">Reference proteome</keyword>
<keyword id="KW-0964">Secreted</keyword>
<keyword id="KW-0720">Serine protease</keyword>
<keyword id="KW-0732">Signal</keyword>
<keyword id="KW-0865">Zymogen</keyword>
<gene>
    <name evidence="6" type="primary">CMA1</name>
</gene>
<comment type="function">
    <text evidence="1">Major secreted protease of mast cells with suspected roles in vasoactive peptide generation, extracellular matrix degradation, and regulation of gland secretion.</text>
</comment>
<comment type="catalytic activity">
    <reaction evidence="1">
        <text>Preferential cleavage: Phe-|-Xaa &gt; Tyr-|-Xaa &gt; Trp-|-Xaa &gt; Leu-|-Xaa.</text>
        <dbReference type="EC" id="3.4.21.39"/>
    </reaction>
</comment>
<comment type="subcellular location">
    <subcellularLocation>
        <location evidence="1">Secreted</location>
    </subcellularLocation>
    <subcellularLocation>
        <location evidence="1">Cytoplasmic granule</location>
    </subcellularLocation>
    <text evidence="1">Mast cell granules.</text>
</comment>
<comment type="similarity">
    <text evidence="3">Belongs to the peptidase S1 family. Granzyme subfamily.</text>
</comment>